<keyword id="KW-0963">Cytoplasm</keyword>
<keyword id="KW-0255">Endonuclease</keyword>
<keyword id="KW-0378">Hydrolase</keyword>
<keyword id="KW-0464">Manganese</keyword>
<keyword id="KW-0479">Metal-binding</keyword>
<keyword id="KW-0540">Nuclease</keyword>
<keyword id="KW-1185">Reference proteome</keyword>
<name>RNH2_ECO55</name>
<proteinExistence type="inferred from homology"/>
<reference key="1">
    <citation type="journal article" date="2009" name="PLoS Genet.">
        <title>Organised genome dynamics in the Escherichia coli species results in highly diverse adaptive paths.</title>
        <authorList>
            <person name="Touchon M."/>
            <person name="Hoede C."/>
            <person name="Tenaillon O."/>
            <person name="Barbe V."/>
            <person name="Baeriswyl S."/>
            <person name="Bidet P."/>
            <person name="Bingen E."/>
            <person name="Bonacorsi S."/>
            <person name="Bouchier C."/>
            <person name="Bouvet O."/>
            <person name="Calteau A."/>
            <person name="Chiapello H."/>
            <person name="Clermont O."/>
            <person name="Cruveiller S."/>
            <person name="Danchin A."/>
            <person name="Diard M."/>
            <person name="Dossat C."/>
            <person name="Karoui M.E."/>
            <person name="Frapy E."/>
            <person name="Garry L."/>
            <person name="Ghigo J.M."/>
            <person name="Gilles A.M."/>
            <person name="Johnson J."/>
            <person name="Le Bouguenec C."/>
            <person name="Lescat M."/>
            <person name="Mangenot S."/>
            <person name="Martinez-Jehanne V."/>
            <person name="Matic I."/>
            <person name="Nassif X."/>
            <person name="Oztas S."/>
            <person name="Petit M.A."/>
            <person name="Pichon C."/>
            <person name="Rouy Z."/>
            <person name="Ruf C.S."/>
            <person name="Schneider D."/>
            <person name="Tourret J."/>
            <person name="Vacherie B."/>
            <person name="Vallenet D."/>
            <person name="Medigue C."/>
            <person name="Rocha E.P.C."/>
            <person name="Denamur E."/>
        </authorList>
    </citation>
    <scope>NUCLEOTIDE SEQUENCE [LARGE SCALE GENOMIC DNA]</scope>
    <source>
        <strain>55989 / EAEC</strain>
    </source>
</reference>
<accession>B7LGP5</accession>
<gene>
    <name evidence="1" type="primary">rnhB</name>
    <name type="ordered locus">EC55989_0177</name>
</gene>
<dbReference type="EC" id="3.1.26.4" evidence="1"/>
<dbReference type="EMBL" id="CU928145">
    <property type="protein sequence ID" value="CAU96063.1"/>
    <property type="molecule type" value="Genomic_DNA"/>
</dbReference>
<dbReference type="RefSeq" id="WP_000569430.1">
    <property type="nucleotide sequence ID" value="NC_011748.1"/>
</dbReference>
<dbReference type="SMR" id="B7LGP5"/>
<dbReference type="GeneID" id="93777242"/>
<dbReference type="KEGG" id="eck:EC55989_0177"/>
<dbReference type="HOGENOM" id="CLU_036532_3_2_6"/>
<dbReference type="Proteomes" id="UP000000746">
    <property type="component" value="Chromosome"/>
</dbReference>
<dbReference type="GO" id="GO:0005737">
    <property type="term" value="C:cytoplasm"/>
    <property type="evidence" value="ECO:0007669"/>
    <property type="project" value="UniProtKB-SubCell"/>
</dbReference>
<dbReference type="GO" id="GO:0032299">
    <property type="term" value="C:ribonuclease H2 complex"/>
    <property type="evidence" value="ECO:0007669"/>
    <property type="project" value="TreeGrafter"/>
</dbReference>
<dbReference type="GO" id="GO:0030145">
    <property type="term" value="F:manganese ion binding"/>
    <property type="evidence" value="ECO:0007669"/>
    <property type="project" value="UniProtKB-UniRule"/>
</dbReference>
<dbReference type="GO" id="GO:0003723">
    <property type="term" value="F:RNA binding"/>
    <property type="evidence" value="ECO:0007669"/>
    <property type="project" value="InterPro"/>
</dbReference>
<dbReference type="GO" id="GO:0004523">
    <property type="term" value="F:RNA-DNA hybrid ribonuclease activity"/>
    <property type="evidence" value="ECO:0007669"/>
    <property type="project" value="UniProtKB-UniRule"/>
</dbReference>
<dbReference type="GO" id="GO:0043137">
    <property type="term" value="P:DNA replication, removal of RNA primer"/>
    <property type="evidence" value="ECO:0007669"/>
    <property type="project" value="TreeGrafter"/>
</dbReference>
<dbReference type="GO" id="GO:0006298">
    <property type="term" value="P:mismatch repair"/>
    <property type="evidence" value="ECO:0007669"/>
    <property type="project" value="TreeGrafter"/>
</dbReference>
<dbReference type="CDD" id="cd07182">
    <property type="entry name" value="RNase_HII_bacteria_HII_like"/>
    <property type="match status" value="1"/>
</dbReference>
<dbReference type="FunFam" id="3.30.420.10:FF:000006">
    <property type="entry name" value="Ribonuclease HII"/>
    <property type="match status" value="1"/>
</dbReference>
<dbReference type="Gene3D" id="3.30.420.10">
    <property type="entry name" value="Ribonuclease H-like superfamily/Ribonuclease H"/>
    <property type="match status" value="1"/>
</dbReference>
<dbReference type="HAMAP" id="MF_00052_B">
    <property type="entry name" value="RNase_HII_B"/>
    <property type="match status" value="1"/>
</dbReference>
<dbReference type="InterPro" id="IPR022898">
    <property type="entry name" value="RNase_HII"/>
</dbReference>
<dbReference type="InterPro" id="IPR001352">
    <property type="entry name" value="RNase_HII/HIII"/>
</dbReference>
<dbReference type="InterPro" id="IPR024567">
    <property type="entry name" value="RNase_HII/HIII_dom"/>
</dbReference>
<dbReference type="InterPro" id="IPR012337">
    <property type="entry name" value="RNaseH-like_sf"/>
</dbReference>
<dbReference type="InterPro" id="IPR036397">
    <property type="entry name" value="RNaseH_sf"/>
</dbReference>
<dbReference type="NCBIfam" id="NF000594">
    <property type="entry name" value="PRK00015.1-1"/>
    <property type="match status" value="1"/>
</dbReference>
<dbReference type="NCBIfam" id="NF000595">
    <property type="entry name" value="PRK00015.1-3"/>
    <property type="match status" value="1"/>
</dbReference>
<dbReference type="NCBIfam" id="NF000596">
    <property type="entry name" value="PRK00015.1-4"/>
    <property type="match status" value="1"/>
</dbReference>
<dbReference type="PANTHER" id="PTHR10954">
    <property type="entry name" value="RIBONUCLEASE H2 SUBUNIT A"/>
    <property type="match status" value="1"/>
</dbReference>
<dbReference type="PANTHER" id="PTHR10954:SF18">
    <property type="entry name" value="RIBONUCLEASE HII"/>
    <property type="match status" value="1"/>
</dbReference>
<dbReference type="Pfam" id="PF01351">
    <property type="entry name" value="RNase_HII"/>
    <property type="match status" value="1"/>
</dbReference>
<dbReference type="SUPFAM" id="SSF53098">
    <property type="entry name" value="Ribonuclease H-like"/>
    <property type="match status" value="1"/>
</dbReference>
<dbReference type="PROSITE" id="PS51975">
    <property type="entry name" value="RNASE_H_2"/>
    <property type="match status" value="1"/>
</dbReference>
<comment type="function">
    <text evidence="1">Endonuclease that specifically degrades the RNA of RNA-DNA hybrids.</text>
</comment>
<comment type="catalytic activity">
    <reaction evidence="1">
        <text>Endonucleolytic cleavage to 5'-phosphomonoester.</text>
        <dbReference type="EC" id="3.1.26.4"/>
    </reaction>
</comment>
<comment type="cofactor">
    <cofactor evidence="1">
        <name>Mn(2+)</name>
        <dbReference type="ChEBI" id="CHEBI:29035"/>
    </cofactor>
    <cofactor evidence="1">
        <name>Mg(2+)</name>
        <dbReference type="ChEBI" id="CHEBI:18420"/>
    </cofactor>
    <text evidence="1">Manganese or magnesium. Binds 1 divalent metal ion per monomer in the absence of substrate. May bind a second metal ion after substrate binding.</text>
</comment>
<comment type="subcellular location">
    <subcellularLocation>
        <location evidence="1">Cytoplasm</location>
    </subcellularLocation>
</comment>
<comment type="similarity">
    <text evidence="1">Belongs to the RNase HII family.</text>
</comment>
<protein>
    <recommendedName>
        <fullName evidence="1">Ribonuclease HII</fullName>
        <shortName evidence="1">RNase HII</shortName>
        <ecNumber evidence="1">3.1.26.4</ecNumber>
    </recommendedName>
</protein>
<feature type="chain" id="PRO_1000194450" description="Ribonuclease HII">
    <location>
        <begin position="1"/>
        <end position="198"/>
    </location>
</feature>
<feature type="domain" description="RNase H type-2" evidence="2">
    <location>
        <begin position="10"/>
        <end position="198"/>
    </location>
</feature>
<feature type="binding site" evidence="1">
    <location>
        <position position="16"/>
    </location>
    <ligand>
        <name>a divalent metal cation</name>
        <dbReference type="ChEBI" id="CHEBI:60240"/>
    </ligand>
</feature>
<feature type="binding site" evidence="1">
    <location>
        <position position="17"/>
    </location>
    <ligand>
        <name>a divalent metal cation</name>
        <dbReference type="ChEBI" id="CHEBI:60240"/>
    </ligand>
</feature>
<feature type="binding site" evidence="1">
    <location>
        <position position="108"/>
    </location>
    <ligand>
        <name>a divalent metal cation</name>
        <dbReference type="ChEBI" id="CHEBI:60240"/>
    </ligand>
</feature>
<organism>
    <name type="scientific">Escherichia coli (strain 55989 / EAEC)</name>
    <dbReference type="NCBI Taxonomy" id="585055"/>
    <lineage>
        <taxon>Bacteria</taxon>
        <taxon>Pseudomonadati</taxon>
        <taxon>Pseudomonadota</taxon>
        <taxon>Gammaproteobacteria</taxon>
        <taxon>Enterobacterales</taxon>
        <taxon>Enterobacteriaceae</taxon>
        <taxon>Escherichia</taxon>
    </lineage>
</organism>
<evidence type="ECO:0000255" key="1">
    <source>
        <dbReference type="HAMAP-Rule" id="MF_00052"/>
    </source>
</evidence>
<evidence type="ECO:0000255" key="2">
    <source>
        <dbReference type="PROSITE-ProRule" id="PRU01319"/>
    </source>
</evidence>
<sequence length="198" mass="21526">MIEFVYPHTQLVAGVDEVGRGPLVGAVVTAAVILDPARPIAGLNDSKKLSEKRRLALYEEIKEKALSWSLGRAEPHEIDELNILHATMLAMQRAVAGLHIAPEYVLIDGNRCPKLPMPAMAVVKGDSRVPEISAASILAKVTRDAEMAALDIVFPQYGFAQHKGYPTAFHLEKLAEHGATEHHRRSFGPVKRALGLAS</sequence>